<keyword id="KW-0963">Cytoplasm</keyword>
<keyword id="KW-0206">Cytoskeleton</keyword>
<keyword id="KW-0479">Metal-binding</keyword>
<keyword id="KW-0539">Nucleus</keyword>
<keyword id="KW-1267">Proteomics identification</keyword>
<keyword id="KW-1185">Reference proteome</keyword>
<keyword id="KW-0832">Ubl conjugation</keyword>
<keyword id="KW-0862">Zinc</keyword>
<gene>
    <name evidence="7 9" type="primary">BEX4</name>
    <name evidence="9" type="synonym">BEXL1</name>
    <name evidence="7" type="synonym">NADE3</name>
</gene>
<evidence type="ECO:0000250" key="1">
    <source>
        <dbReference type="UniProtKB" id="Q3MKP9"/>
    </source>
</evidence>
<evidence type="ECO:0000250" key="2">
    <source>
        <dbReference type="UniProtKB" id="Q9CWT2"/>
    </source>
</evidence>
<evidence type="ECO:0000250" key="3">
    <source>
        <dbReference type="UniProtKB" id="Q9WTZ9"/>
    </source>
</evidence>
<evidence type="ECO:0000256" key="4">
    <source>
        <dbReference type="SAM" id="MobiDB-lite"/>
    </source>
</evidence>
<evidence type="ECO:0000269" key="5">
    <source>
    </source>
</evidence>
<evidence type="ECO:0000269" key="6">
    <source>
    </source>
</evidence>
<evidence type="ECO:0000303" key="7">
    <source>
    </source>
</evidence>
<evidence type="ECO:0000305" key="8"/>
<evidence type="ECO:0000312" key="9">
    <source>
        <dbReference type="HGNC" id="HGNC:25475"/>
    </source>
</evidence>
<name>BEX4_HUMAN</name>
<feature type="chain" id="PRO_0000229783" description="Protein BEX4">
    <location>
        <begin position="1"/>
        <end position="120"/>
    </location>
</feature>
<feature type="region of interest" description="Disordered" evidence="4">
    <location>
        <begin position="1"/>
        <end position="54"/>
    </location>
</feature>
<feature type="region of interest" description="Interaction with alpha-tubulin" evidence="6">
    <location>
        <begin position="31"/>
        <end position="120"/>
    </location>
</feature>
<feature type="region of interest" description="Interaction with SIRT2" evidence="6">
    <location>
        <begin position="31"/>
        <end position="90"/>
    </location>
</feature>
<feature type="compositionally biased region" description="Low complexity" evidence="4">
    <location>
        <begin position="8"/>
        <end position="27"/>
    </location>
</feature>
<feature type="binding site" evidence="3">
    <location>
        <position position="117"/>
    </location>
    <ligand>
        <name>Zn(2+)</name>
        <dbReference type="ChEBI" id="CHEBI:29105"/>
        <note>ligand shared with FEM1B</note>
    </ligand>
</feature>
<dbReference type="EMBL" id="AK000959">
    <property type="protein sequence ID" value="BAA91443.1"/>
    <property type="molecule type" value="mRNA"/>
</dbReference>
<dbReference type="EMBL" id="AY833563">
    <property type="protein sequence ID" value="AAX40681.1"/>
    <property type="molecule type" value="mRNA"/>
</dbReference>
<dbReference type="EMBL" id="AL035494">
    <property type="status" value="NOT_ANNOTATED_CDS"/>
    <property type="molecule type" value="Genomic_DNA"/>
</dbReference>
<dbReference type="CCDS" id="CCDS35355.1"/>
<dbReference type="RefSeq" id="NP_001073894.1">
    <property type="nucleotide sequence ID" value="NM_001080425.4"/>
</dbReference>
<dbReference type="RefSeq" id="NP_001121160.1">
    <property type="nucleotide sequence ID" value="NM_001127688.2"/>
</dbReference>
<dbReference type="BioGRID" id="121131">
    <property type="interactions" value="19"/>
</dbReference>
<dbReference type="FunCoup" id="Q9NWD9">
    <property type="interactions" value="215"/>
</dbReference>
<dbReference type="IntAct" id="Q9NWD9">
    <property type="interactions" value="17"/>
</dbReference>
<dbReference type="MINT" id="Q9NWD9"/>
<dbReference type="STRING" id="9606.ENSP00000361780"/>
<dbReference type="iPTMnet" id="Q9NWD9"/>
<dbReference type="PhosphoSitePlus" id="Q9NWD9"/>
<dbReference type="BioMuta" id="BEX4"/>
<dbReference type="DMDM" id="74753015"/>
<dbReference type="jPOST" id="Q9NWD9"/>
<dbReference type="MassIVE" id="Q9NWD9"/>
<dbReference type="PaxDb" id="9606-ENSP00000361780"/>
<dbReference type="PeptideAtlas" id="Q9NWD9"/>
<dbReference type="ProteomicsDB" id="82929"/>
<dbReference type="Pumba" id="Q9NWD9"/>
<dbReference type="Antibodypedia" id="29002">
    <property type="antibodies" value="109 antibodies from 15 providers"/>
</dbReference>
<dbReference type="DNASU" id="56271"/>
<dbReference type="Ensembl" id="ENST00000372691.3">
    <property type="protein sequence ID" value="ENSP00000361776.3"/>
    <property type="gene ID" value="ENSG00000102409.10"/>
</dbReference>
<dbReference type="Ensembl" id="ENST00000372695.6">
    <property type="protein sequence ID" value="ENSP00000361780.5"/>
    <property type="gene ID" value="ENSG00000102409.10"/>
</dbReference>
<dbReference type="GeneID" id="56271"/>
<dbReference type="KEGG" id="hsa:56271"/>
<dbReference type="MANE-Select" id="ENST00000372695.6">
    <property type="protein sequence ID" value="ENSP00000361780.5"/>
    <property type="RefSeq nucleotide sequence ID" value="NM_001080425.4"/>
    <property type="RefSeq protein sequence ID" value="NP_001073894.1"/>
</dbReference>
<dbReference type="UCSC" id="uc004ejv.5">
    <property type="organism name" value="human"/>
</dbReference>
<dbReference type="AGR" id="HGNC:25475"/>
<dbReference type="CTD" id="56271"/>
<dbReference type="DisGeNET" id="56271"/>
<dbReference type="GeneCards" id="BEX4"/>
<dbReference type="HGNC" id="HGNC:25475">
    <property type="gene designation" value="BEX4"/>
</dbReference>
<dbReference type="HPA" id="ENSG00000102409">
    <property type="expression patterns" value="Low tissue specificity"/>
</dbReference>
<dbReference type="MIM" id="300692">
    <property type="type" value="gene"/>
</dbReference>
<dbReference type="neXtProt" id="NX_Q9NWD9"/>
<dbReference type="OpenTargets" id="ENSG00000102409"/>
<dbReference type="PharmGKB" id="PA162377543"/>
<dbReference type="VEuPathDB" id="HostDB:ENSG00000102409"/>
<dbReference type="eggNOG" id="ENOG502TDUR">
    <property type="taxonomic scope" value="Eukaryota"/>
</dbReference>
<dbReference type="GeneTree" id="ENSGT00940000162932"/>
<dbReference type="HOGENOM" id="CLU_123122_0_0_1"/>
<dbReference type="InParanoid" id="Q9NWD9"/>
<dbReference type="OMA" id="WAIPSRH"/>
<dbReference type="OrthoDB" id="9836927at2759"/>
<dbReference type="PAN-GO" id="Q9NWD9">
    <property type="GO annotations" value="2 GO annotations based on evolutionary models"/>
</dbReference>
<dbReference type="PhylomeDB" id="Q9NWD9"/>
<dbReference type="TreeFam" id="TF337909"/>
<dbReference type="PathwayCommons" id="Q9NWD9"/>
<dbReference type="SignaLink" id="Q9NWD9"/>
<dbReference type="BioGRID-ORCS" id="56271">
    <property type="hits" value="6 hits in 785 CRISPR screens"/>
</dbReference>
<dbReference type="ChiTaRS" id="BEX4">
    <property type="organism name" value="human"/>
</dbReference>
<dbReference type="GenomeRNAi" id="56271"/>
<dbReference type="Pharos" id="Q9NWD9">
    <property type="development level" value="Tbio"/>
</dbReference>
<dbReference type="PRO" id="PR:Q9NWD9"/>
<dbReference type="Proteomes" id="UP000005640">
    <property type="component" value="Chromosome X"/>
</dbReference>
<dbReference type="RNAct" id="Q9NWD9">
    <property type="molecule type" value="protein"/>
</dbReference>
<dbReference type="Bgee" id="ENSG00000102409">
    <property type="expression patterns" value="Expressed in prefrontal cortex and 207 other cell types or tissues"/>
</dbReference>
<dbReference type="GO" id="GO:0005737">
    <property type="term" value="C:cytoplasm"/>
    <property type="evidence" value="ECO:0000314"/>
    <property type="project" value="UniProtKB"/>
</dbReference>
<dbReference type="GO" id="GO:0005829">
    <property type="term" value="C:cytosol"/>
    <property type="evidence" value="ECO:0000314"/>
    <property type="project" value="HPA"/>
</dbReference>
<dbReference type="GO" id="GO:0005874">
    <property type="term" value="C:microtubule"/>
    <property type="evidence" value="ECO:0000314"/>
    <property type="project" value="UniProtKB"/>
</dbReference>
<dbReference type="GO" id="GO:0005654">
    <property type="term" value="C:nucleoplasm"/>
    <property type="evidence" value="ECO:0000314"/>
    <property type="project" value="HPA"/>
</dbReference>
<dbReference type="GO" id="GO:0005634">
    <property type="term" value="C:nucleus"/>
    <property type="evidence" value="ECO:0000314"/>
    <property type="project" value="UniProtKB"/>
</dbReference>
<dbReference type="GO" id="GO:0000922">
    <property type="term" value="C:spindle pole"/>
    <property type="evidence" value="ECO:0000314"/>
    <property type="project" value="UniProtKB"/>
</dbReference>
<dbReference type="GO" id="GO:0043014">
    <property type="term" value="F:alpha-tubulin binding"/>
    <property type="evidence" value="ECO:0000314"/>
    <property type="project" value="UniProtKB"/>
</dbReference>
<dbReference type="GO" id="GO:0042826">
    <property type="term" value="F:histone deacetylase binding"/>
    <property type="evidence" value="ECO:0000353"/>
    <property type="project" value="UniProtKB"/>
</dbReference>
<dbReference type="GO" id="GO:0046872">
    <property type="term" value="F:metal ion binding"/>
    <property type="evidence" value="ECO:0007669"/>
    <property type="project" value="UniProtKB-KW"/>
</dbReference>
<dbReference type="GO" id="GO:0140678">
    <property type="term" value="F:molecular function inhibitor activity"/>
    <property type="evidence" value="ECO:0000250"/>
    <property type="project" value="UniProtKB"/>
</dbReference>
<dbReference type="GO" id="GO:0007059">
    <property type="term" value="P:chromosome segregation"/>
    <property type="evidence" value="ECO:0000315"/>
    <property type="project" value="UniProtKB"/>
</dbReference>
<dbReference type="GO" id="GO:0031397">
    <property type="term" value="P:negative regulation of protein ubiquitination"/>
    <property type="evidence" value="ECO:0000250"/>
    <property type="project" value="UniProtKB"/>
</dbReference>
<dbReference type="GO" id="GO:1904428">
    <property type="term" value="P:negative regulation of tubulin deacetylation"/>
    <property type="evidence" value="ECO:0000315"/>
    <property type="project" value="UniProtKB"/>
</dbReference>
<dbReference type="GO" id="GO:0030334">
    <property type="term" value="P:regulation of cell migration"/>
    <property type="evidence" value="ECO:0000315"/>
    <property type="project" value="UniProtKB"/>
</dbReference>
<dbReference type="GO" id="GO:0042127">
    <property type="term" value="P:regulation of cell population proliferation"/>
    <property type="evidence" value="ECO:0000315"/>
    <property type="project" value="UniProtKB"/>
</dbReference>
<dbReference type="InterPro" id="IPR007623">
    <property type="entry name" value="BEX"/>
</dbReference>
<dbReference type="InterPro" id="IPR021156">
    <property type="entry name" value="TF_A-like/BEX"/>
</dbReference>
<dbReference type="PANTHER" id="PTHR13987">
    <property type="entry name" value="PROTEIN BEX4"/>
    <property type="match status" value="1"/>
</dbReference>
<dbReference type="PANTHER" id="PTHR13987:SF3">
    <property type="entry name" value="PROTEIN BEX4"/>
    <property type="match status" value="1"/>
</dbReference>
<dbReference type="Pfam" id="PF04538">
    <property type="entry name" value="BEX"/>
    <property type="match status" value="1"/>
</dbReference>
<dbReference type="PIRSF" id="PIRSF008633">
    <property type="entry name" value="BEX"/>
    <property type="match status" value="1"/>
</dbReference>
<accession>Q9NWD9</accession>
<comment type="function">
    <text evidence="2 6">May play a role in microtubule deacetylation by negatively regulating the SIRT2 deacetylase activity toward alpha-tubulin and thereby participate in the control of cell cycle progression and genomic stability (PubMed:27512957). In absence of reductive stress, acts as a pseudosubstrate for the CRL2(FEM1B) complex: associates with FEM1B via zinc, thereby preventing association between FEM1B and its substrates (By similarity).</text>
</comment>
<comment type="subunit">
    <text evidence="6">Interacts with alpha-tubulin (PubMed:27512957). Interacts with SIRT2 (PubMed:27512957).</text>
</comment>
<comment type="interaction">
    <interactant intactId="EBI-15105944">
        <id>Q9NWD9</id>
    </interactant>
    <interactant intactId="EBI-2350461">
        <id>Q15777</id>
        <label>MPPED2</label>
    </interactant>
    <organismsDiffer>false</organismsDiffer>
    <experiments>3</experiments>
</comment>
<comment type="subcellular location">
    <subcellularLocation>
        <location evidence="6">Cytoplasm</location>
        <location evidence="6">Cytoskeleton</location>
        <location evidence="6">Spindle pole</location>
    </subcellularLocation>
    <subcellularLocation>
        <location evidence="6">Nucleus</location>
    </subcellularLocation>
    <subcellularLocation>
        <location evidence="6">Cytoplasm</location>
    </subcellularLocation>
    <text evidence="6">Also localizes to microtubules.</text>
</comment>
<comment type="tissue specificity">
    <text evidence="5">Very high expression in heart, skeletal muscle, liver, and kidney. The levels of expression are uniform throughout the brain.</text>
</comment>
<comment type="PTM">
    <text evidence="1">Ubiquitinated and degraded by the proteasome.</text>
</comment>
<comment type="similarity">
    <text evidence="8">Belongs to the BEX family.</text>
</comment>
<organism>
    <name type="scientific">Homo sapiens</name>
    <name type="common">Human</name>
    <dbReference type="NCBI Taxonomy" id="9606"/>
    <lineage>
        <taxon>Eukaryota</taxon>
        <taxon>Metazoa</taxon>
        <taxon>Chordata</taxon>
        <taxon>Craniata</taxon>
        <taxon>Vertebrata</taxon>
        <taxon>Euteleostomi</taxon>
        <taxon>Mammalia</taxon>
        <taxon>Eutheria</taxon>
        <taxon>Euarchontoglires</taxon>
        <taxon>Primates</taxon>
        <taxon>Haplorrhini</taxon>
        <taxon>Catarrhini</taxon>
        <taxon>Hominidae</taxon>
        <taxon>Homo</taxon>
    </lineage>
</organism>
<protein>
    <recommendedName>
        <fullName evidence="8">Protein BEX4</fullName>
    </recommendedName>
    <alternativeName>
        <fullName evidence="9">BEX1-like protein 1</fullName>
    </alternativeName>
    <alternativeName>
        <fullName evidence="7 9">Brain-expressed X-linked protein 4</fullName>
    </alternativeName>
    <alternativeName>
        <fullName evidence="7">Nerve growth factor receptor-associated protein 3</fullName>
    </alternativeName>
</protein>
<sequence>MESKEELAANNLNGENAQQENEGGEQAPTQNEEESRHLGGGEGQKPGGNIRRGRVRRLVPNFRWAIPNRHIEHNEARDDVERFVGQMMEIKRKTREQQMRHYMRFQTPEPDNHYDFCLIP</sequence>
<reference key="1">
    <citation type="journal article" date="2005" name="Gene">
        <title>Characterization of the Bex gene family in humans, mice, and rats.</title>
        <authorList>
            <person name="Alvarez E."/>
            <person name="Zhou W."/>
            <person name="Witta S.E."/>
            <person name="Freed C.R."/>
        </authorList>
    </citation>
    <scope>NUCLEOTIDE SEQUENCE [MRNA]</scope>
    <scope>TISSUE SPECIFICITY</scope>
</reference>
<reference key="2">
    <citation type="journal article" date="2004" name="Nat. Genet.">
        <title>Complete sequencing and characterization of 21,243 full-length human cDNAs.</title>
        <authorList>
            <person name="Ota T."/>
            <person name="Suzuki Y."/>
            <person name="Nishikawa T."/>
            <person name="Otsuki T."/>
            <person name="Sugiyama T."/>
            <person name="Irie R."/>
            <person name="Wakamatsu A."/>
            <person name="Hayashi K."/>
            <person name="Sato H."/>
            <person name="Nagai K."/>
            <person name="Kimura K."/>
            <person name="Makita H."/>
            <person name="Sekine M."/>
            <person name="Obayashi M."/>
            <person name="Nishi T."/>
            <person name="Shibahara T."/>
            <person name="Tanaka T."/>
            <person name="Ishii S."/>
            <person name="Yamamoto J."/>
            <person name="Saito K."/>
            <person name="Kawai Y."/>
            <person name="Isono Y."/>
            <person name="Nakamura Y."/>
            <person name="Nagahari K."/>
            <person name="Murakami K."/>
            <person name="Yasuda T."/>
            <person name="Iwayanagi T."/>
            <person name="Wagatsuma M."/>
            <person name="Shiratori A."/>
            <person name="Sudo H."/>
            <person name="Hosoiri T."/>
            <person name="Kaku Y."/>
            <person name="Kodaira H."/>
            <person name="Kondo H."/>
            <person name="Sugawara M."/>
            <person name="Takahashi M."/>
            <person name="Kanda K."/>
            <person name="Yokoi T."/>
            <person name="Furuya T."/>
            <person name="Kikkawa E."/>
            <person name="Omura Y."/>
            <person name="Abe K."/>
            <person name="Kamihara K."/>
            <person name="Katsuta N."/>
            <person name="Sato K."/>
            <person name="Tanikawa M."/>
            <person name="Yamazaki M."/>
            <person name="Ninomiya K."/>
            <person name="Ishibashi T."/>
            <person name="Yamashita H."/>
            <person name="Murakawa K."/>
            <person name="Fujimori K."/>
            <person name="Tanai H."/>
            <person name="Kimata M."/>
            <person name="Watanabe M."/>
            <person name="Hiraoka S."/>
            <person name="Chiba Y."/>
            <person name="Ishida S."/>
            <person name="Ono Y."/>
            <person name="Takiguchi S."/>
            <person name="Watanabe S."/>
            <person name="Yosida M."/>
            <person name="Hotuta T."/>
            <person name="Kusano J."/>
            <person name="Kanehori K."/>
            <person name="Takahashi-Fujii A."/>
            <person name="Hara H."/>
            <person name="Tanase T.-O."/>
            <person name="Nomura Y."/>
            <person name="Togiya S."/>
            <person name="Komai F."/>
            <person name="Hara R."/>
            <person name="Takeuchi K."/>
            <person name="Arita M."/>
            <person name="Imose N."/>
            <person name="Musashino K."/>
            <person name="Yuuki H."/>
            <person name="Oshima A."/>
            <person name="Sasaki N."/>
            <person name="Aotsuka S."/>
            <person name="Yoshikawa Y."/>
            <person name="Matsunawa H."/>
            <person name="Ichihara T."/>
            <person name="Shiohata N."/>
            <person name="Sano S."/>
            <person name="Moriya S."/>
            <person name="Momiyama H."/>
            <person name="Satoh N."/>
            <person name="Takami S."/>
            <person name="Terashima Y."/>
            <person name="Suzuki O."/>
            <person name="Nakagawa S."/>
            <person name="Senoh A."/>
            <person name="Mizoguchi H."/>
            <person name="Goto Y."/>
            <person name="Shimizu F."/>
            <person name="Wakebe H."/>
            <person name="Hishigaki H."/>
            <person name="Watanabe T."/>
            <person name="Sugiyama A."/>
            <person name="Takemoto M."/>
            <person name="Kawakami B."/>
            <person name="Yamazaki M."/>
            <person name="Watanabe K."/>
            <person name="Kumagai A."/>
            <person name="Itakura S."/>
            <person name="Fukuzumi Y."/>
            <person name="Fujimori Y."/>
            <person name="Komiyama M."/>
            <person name="Tashiro H."/>
            <person name="Tanigami A."/>
            <person name="Fujiwara T."/>
            <person name="Ono T."/>
            <person name="Yamada K."/>
            <person name="Fujii Y."/>
            <person name="Ozaki K."/>
            <person name="Hirao M."/>
            <person name="Ohmori Y."/>
            <person name="Kawabata A."/>
            <person name="Hikiji T."/>
            <person name="Kobatake N."/>
            <person name="Inagaki H."/>
            <person name="Ikema Y."/>
            <person name="Okamoto S."/>
            <person name="Okitani R."/>
            <person name="Kawakami T."/>
            <person name="Noguchi S."/>
            <person name="Itoh T."/>
            <person name="Shigeta K."/>
            <person name="Senba T."/>
            <person name="Matsumura K."/>
            <person name="Nakajima Y."/>
            <person name="Mizuno T."/>
            <person name="Morinaga M."/>
            <person name="Sasaki M."/>
            <person name="Togashi T."/>
            <person name="Oyama M."/>
            <person name="Hata H."/>
            <person name="Watanabe M."/>
            <person name="Komatsu T."/>
            <person name="Mizushima-Sugano J."/>
            <person name="Satoh T."/>
            <person name="Shirai Y."/>
            <person name="Takahashi Y."/>
            <person name="Nakagawa K."/>
            <person name="Okumura K."/>
            <person name="Nagase T."/>
            <person name="Nomura N."/>
            <person name="Kikuchi H."/>
            <person name="Masuho Y."/>
            <person name="Yamashita R."/>
            <person name="Nakai K."/>
            <person name="Yada T."/>
            <person name="Nakamura Y."/>
            <person name="Ohara O."/>
            <person name="Isogai T."/>
            <person name="Sugano S."/>
        </authorList>
    </citation>
    <scope>NUCLEOTIDE SEQUENCE [LARGE SCALE MRNA]</scope>
    <source>
        <tissue>Embryo</tissue>
    </source>
</reference>
<reference key="3">
    <citation type="journal article" date="2005" name="Nature">
        <title>The DNA sequence of the human X chromosome.</title>
        <authorList>
            <person name="Ross M.T."/>
            <person name="Grafham D.V."/>
            <person name="Coffey A.J."/>
            <person name="Scherer S."/>
            <person name="McLay K."/>
            <person name="Muzny D."/>
            <person name="Platzer M."/>
            <person name="Howell G.R."/>
            <person name="Burrows C."/>
            <person name="Bird C.P."/>
            <person name="Frankish A."/>
            <person name="Lovell F.L."/>
            <person name="Howe K.L."/>
            <person name="Ashurst J.L."/>
            <person name="Fulton R.S."/>
            <person name="Sudbrak R."/>
            <person name="Wen G."/>
            <person name="Jones M.C."/>
            <person name="Hurles M.E."/>
            <person name="Andrews T.D."/>
            <person name="Scott C.E."/>
            <person name="Searle S."/>
            <person name="Ramser J."/>
            <person name="Whittaker A."/>
            <person name="Deadman R."/>
            <person name="Carter N.P."/>
            <person name="Hunt S.E."/>
            <person name="Chen R."/>
            <person name="Cree A."/>
            <person name="Gunaratne P."/>
            <person name="Havlak P."/>
            <person name="Hodgson A."/>
            <person name="Metzker M.L."/>
            <person name="Richards S."/>
            <person name="Scott G."/>
            <person name="Steffen D."/>
            <person name="Sodergren E."/>
            <person name="Wheeler D.A."/>
            <person name="Worley K.C."/>
            <person name="Ainscough R."/>
            <person name="Ambrose K.D."/>
            <person name="Ansari-Lari M.A."/>
            <person name="Aradhya S."/>
            <person name="Ashwell R.I."/>
            <person name="Babbage A.K."/>
            <person name="Bagguley C.L."/>
            <person name="Ballabio A."/>
            <person name="Banerjee R."/>
            <person name="Barker G.E."/>
            <person name="Barlow K.F."/>
            <person name="Barrett I.P."/>
            <person name="Bates K.N."/>
            <person name="Beare D.M."/>
            <person name="Beasley H."/>
            <person name="Beasley O."/>
            <person name="Beck A."/>
            <person name="Bethel G."/>
            <person name="Blechschmidt K."/>
            <person name="Brady N."/>
            <person name="Bray-Allen S."/>
            <person name="Bridgeman A.M."/>
            <person name="Brown A.J."/>
            <person name="Brown M.J."/>
            <person name="Bonnin D."/>
            <person name="Bruford E.A."/>
            <person name="Buhay C."/>
            <person name="Burch P."/>
            <person name="Burford D."/>
            <person name="Burgess J."/>
            <person name="Burrill W."/>
            <person name="Burton J."/>
            <person name="Bye J.M."/>
            <person name="Carder C."/>
            <person name="Carrel L."/>
            <person name="Chako J."/>
            <person name="Chapman J.C."/>
            <person name="Chavez D."/>
            <person name="Chen E."/>
            <person name="Chen G."/>
            <person name="Chen Y."/>
            <person name="Chen Z."/>
            <person name="Chinault C."/>
            <person name="Ciccodicola A."/>
            <person name="Clark S.Y."/>
            <person name="Clarke G."/>
            <person name="Clee C.M."/>
            <person name="Clegg S."/>
            <person name="Clerc-Blankenburg K."/>
            <person name="Clifford K."/>
            <person name="Cobley V."/>
            <person name="Cole C.G."/>
            <person name="Conquer J.S."/>
            <person name="Corby N."/>
            <person name="Connor R.E."/>
            <person name="David R."/>
            <person name="Davies J."/>
            <person name="Davis C."/>
            <person name="Davis J."/>
            <person name="Delgado O."/>
            <person name="Deshazo D."/>
            <person name="Dhami P."/>
            <person name="Ding Y."/>
            <person name="Dinh H."/>
            <person name="Dodsworth S."/>
            <person name="Draper H."/>
            <person name="Dugan-Rocha S."/>
            <person name="Dunham A."/>
            <person name="Dunn M."/>
            <person name="Durbin K.J."/>
            <person name="Dutta I."/>
            <person name="Eades T."/>
            <person name="Ellwood M."/>
            <person name="Emery-Cohen A."/>
            <person name="Errington H."/>
            <person name="Evans K.L."/>
            <person name="Faulkner L."/>
            <person name="Francis F."/>
            <person name="Frankland J."/>
            <person name="Fraser A.E."/>
            <person name="Galgoczy P."/>
            <person name="Gilbert J."/>
            <person name="Gill R."/>
            <person name="Gloeckner G."/>
            <person name="Gregory S.G."/>
            <person name="Gribble S."/>
            <person name="Griffiths C."/>
            <person name="Grocock R."/>
            <person name="Gu Y."/>
            <person name="Gwilliam R."/>
            <person name="Hamilton C."/>
            <person name="Hart E.A."/>
            <person name="Hawes A."/>
            <person name="Heath P.D."/>
            <person name="Heitmann K."/>
            <person name="Hennig S."/>
            <person name="Hernandez J."/>
            <person name="Hinzmann B."/>
            <person name="Ho S."/>
            <person name="Hoffs M."/>
            <person name="Howden P.J."/>
            <person name="Huckle E.J."/>
            <person name="Hume J."/>
            <person name="Hunt P.J."/>
            <person name="Hunt A.R."/>
            <person name="Isherwood J."/>
            <person name="Jacob L."/>
            <person name="Johnson D."/>
            <person name="Jones S."/>
            <person name="de Jong P.J."/>
            <person name="Joseph S.S."/>
            <person name="Keenan S."/>
            <person name="Kelly S."/>
            <person name="Kershaw J.K."/>
            <person name="Khan Z."/>
            <person name="Kioschis P."/>
            <person name="Klages S."/>
            <person name="Knights A.J."/>
            <person name="Kosiura A."/>
            <person name="Kovar-Smith C."/>
            <person name="Laird G.K."/>
            <person name="Langford C."/>
            <person name="Lawlor S."/>
            <person name="Leversha M."/>
            <person name="Lewis L."/>
            <person name="Liu W."/>
            <person name="Lloyd C."/>
            <person name="Lloyd D.M."/>
            <person name="Loulseged H."/>
            <person name="Loveland J.E."/>
            <person name="Lovell J.D."/>
            <person name="Lozado R."/>
            <person name="Lu J."/>
            <person name="Lyne R."/>
            <person name="Ma J."/>
            <person name="Maheshwari M."/>
            <person name="Matthews L.H."/>
            <person name="McDowall J."/>
            <person name="McLaren S."/>
            <person name="McMurray A."/>
            <person name="Meidl P."/>
            <person name="Meitinger T."/>
            <person name="Milne S."/>
            <person name="Miner G."/>
            <person name="Mistry S.L."/>
            <person name="Morgan M."/>
            <person name="Morris S."/>
            <person name="Mueller I."/>
            <person name="Mullikin J.C."/>
            <person name="Nguyen N."/>
            <person name="Nordsiek G."/>
            <person name="Nyakatura G."/>
            <person name="O'dell C.N."/>
            <person name="Okwuonu G."/>
            <person name="Palmer S."/>
            <person name="Pandian R."/>
            <person name="Parker D."/>
            <person name="Parrish J."/>
            <person name="Pasternak S."/>
            <person name="Patel D."/>
            <person name="Pearce A.V."/>
            <person name="Pearson D.M."/>
            <person name="Pelan S.E."/>
            <person name="Perez L."/>
            <person name="Porter K.M."/>
            <person name="Ramsey Y."/>
            <person name="Reichwald K."/>
            <person name="Rhodes S."/>
            <person name="Ridler K.A."/>
            <person name="Schlessinger D."/>
            <person name="Schueler M.G."/>
            <person name="Sehra H.K."/>
            <person name="Shaw-Smith C."/>
            <person name="Shen H."/>
            <person name="Sheridan E.M."/>
            <person name="Shownkeen R."/>
            <person name="Skuce C.D."/>
            <person name="Smith M.L."/>
            <person name="Sotheran E.C."/>
            <person name="Steingruber H.E."/>
            <person name="Steward C.A."/>
            <person name="Storey R."/>
            <person name="Swann R.M."/>
            <person name="Swarbreck D."/>
            <person name="Tabor P.E."/>
            <person name="Taudien S."/>
            <person name="Taylor T."/>
            <person name="Teague B."/>
            <person name="Thomas K."/>
            <person name="Thorpe A."/>
            <person name="Timms K."/>
            <person name="Tracey A."/>
            <person name="Trevanion S."/>
            <person name="Tromans A.C."/>
            <person name="d'Urso M."/>
            <person name="Verduzco D."/>
            <person name="Villasana D."/>
            <person name="Waldron L."/>
            <person name="Wall M."/>
            <person name="Wang Q."/>
            <person name="Warren J."/>
            <person name="Warry G.L."/>
            <person name="Wei X."/>
            <person name="West A."/>
            <person name="Whitehead S.L."/>
            <person name="Whiteley M.N."/>
            <person name="Wilkinson J.E."/>
            <person name="Willey D.L."/>
            <person name="Williams G."/>
            <person name="Williams L."/>
            <person name="Williamson A."/>
            <person name="Williamson H."/>
            <person name="Wilming L."/>
            <person name="Woodmansey R.L."/>
            <person name="Wray P.W."/>
            <person name="Yen J."/>
            <person name="Zhang J."/>
            <person name="Zhou J."/>
            <person name="Zoghbi H."/>
            <person name="Zorilla S."/>
            <person name="Buck D."/>
            <person name="Reinhardt R."/>
            <person name="Poustka A."/>
            <person name="Rosenthal A."/>
            <person name="Lehrach H."/>
            <person name="Meindl A."/>
            <person name="Minx P.J."/>
            <person name="Hillier L.W."/>
            <person name="Willard H.F."/>
            <person name="Wilson R.K."/>
            <person name="Waterston R.H."/>
            <person name="Rice C.M."/>
            <person name="Vaudin M."/>
            <person name="Coulson A."/>
            <person name="Nelson D.L."/>
            <person name="Weinstock G."/>
            <person name="Sulston J.E."/>
            <person name="Durbin R.M."/>
            <person name="Hubbard T."/>
            <person name="Gibbs R.A."/>
            <person name="Beck S."/>
            <person name="Rogers J."/>
            <person name="Bentley D.R."/>
        </authorList>
    </citation>
    <scope>NUCLEOTIDE SEQUENCE [LARGE SCALE GENOMIC DNA]</scope>
</reference>
<reference key="4">
    <citation type="journal article" date="2016" name="Cell Death Dis.">
        <title>Oncogenic microtubule hyperacetylation through BEX4-mediated sirtuin 2 inhibition.</title>
        <authorList>
            <person name="Lee J.K."/>
            <person name="Lee J."/>
            <person name="Go H."/>
            <person name="Lee C.G."/>
            <person name="Kim S."/>
            <person name="Kim H.S."/>
            <person name="Cho H."/>
            <person name="Choi K.S."/>
            <person name="Ha G.H."/>
            <person name="Lee C.W."/>
        </authorList>
    </citation>
    <scope>FUNCTION</scope>
    <scope>INTERACTION WITH ALPHA-TUBULIN AND SIRT2</scope>
    <scope>SUBCELLULAR LOCATION</scope>
    <scope>REGION</scope>
</reference>
<proteinExistence type="evidence at protein level"/>